<organism>
    <name type="scientific">Chromobacterium violaceum (strain ATCC 12472 / DSM 30191 / JCM 1249 / CCUG 213 / NBRC 12614 / NCIMB 9131 / NCTC 9757 / MK)</name>
    <dbReference type="NCBI Taxonomy" id="243365"/>
    <lineage>
        <taxon>Bacteria</taxon>
        <taxon>Pseudomonadati</taxon>
        <taxon>Pseudomonadota</taxon>
        <taxon>Betaproteobacteria</taxon>
        <taxon>Neisseriales</taxon>
        <taxon>Chromobacteriaceae</taxon>
        <taxon>Chromobacterium</taxon>
    </lineage>
</organism>
<protein>
    <recommendedName>
        <fullName evidence="1">Protein nucleotidyltransferase YdiU</fullName>
        <ecNumber evidence="1">2.7.7.-</ecNumber>
    </recommendedName>
    <alternativeName>
        <fullName evidence="1">Protein adenylyltransferase YdiU</fullName>
        <ecNumber evidence="1">2.7.7.108</ecNumber>
    </alternativeName>
    <alternativeName>
        <fullName evidence="1">Protein uridylyltransferase YdiU</fullName>
        <ecNumber evidence="1">2.7.7.-</ecNumber>
    </alternativeName>
</protein>
<gene>
    <name evidence="1" type="primary">ydiU</name>
    <name evidence="1" type="synonym">selO</name>
    <name type="ordered locus">CV_1733</name>
</gene>
<proteinExistence type="inferred from homology"/>
<comment type="function">
    <text evidence="1">Nucleotidyltransferase involved in the post-translational modification of proteins. It can catalyze the addition of adenosine monophosphate (AMP) or uridine monophosphate (UMP) to a protein, resulting in modifications known as AMPylation and UMPylation.</text>
</comment>
<comment type="catalytic activity">
    <reaction evidence="1">
        <text>L-seryl-[protein] + ATP = 3-O-(5'-adenylyl)-L-seryl-[protein] + diphosphate</text>
        <dbReference type="Rhea" id="RHEA:58120"/>
        <dbReference type="Rhea" id="RHEA-COMP:9863"/>
        <dbReference type="Rhea" id="RHEA-COMP:15073"/>
        <dbReference type="ChEBI" id="CHEBI:29999"/>
        <dbReference type="ChEBI" id="CHEBI:30616"/>
        <dbReference type="ChEBI" id="CHEBI:33019"/>
        <dbReference type="ChEBI" id="CHEBI:142516"/>
        <dbReference type="EC" id="2.7.7.108"/>
    </reaction>
</comment>
<comment type="catalytic activity">
    <reaction evidence="1">
        <text>L-threonyl-[protein] + ATP = 3-O-(5'-adenylyl)-L-threonyl-[protein] + diphosphate</text>
        <dbReference type="Rhea" id="RHEA:54292"/>
        <dbReference type="Rhea" id="RHEA-COMP:11060"/>
        <dbReference type="Rhea" id="RHEA-COMP:13847"/>
        <dbReference type="ChEBI" id="CHEBI:30013"/>
        <dbReference type="ChEBI" id="CHEBI:30616"/>
        <dbReference type="ChEBI" id="CHEBI:33019"/>
        <dbReference type="ChEBI" id="CHEBI:138113"/>
        <dbReference type="EC" id="2.7.7.108"/>
    </reaction>
</comment>
<comment type="catalytic activity">
    <reaction evidence="1">
        <text>L-tyrosyl-[protein] + ATP = O-(5'-adenylyl)-L-tyrosyl-[protein] + diphosphate</text>
        <dbReference type="Rhea" id="RHEA:54288"/>
        <dbReference type="Rhea" id="RHEA-COMP:10136"/>
        <dbReference type="Rhea" id="RHEA-COMP:13846"/>
        <dbReference type="ChEBI" id="CHEBI:30616"/>
        <dbReference type="ChEBI" id="CHEBI:33019"/>
        <dbReference type="ChEBI" id="CHEBI:46858"/>
        <dbReference type="ChEBI" id="CHEBI:83624"/>
        <dbReference type="EC" id="2.7.7.108"/>
    </reaction>
</comment>
<comment type="catalytic activity">
    <reaction evidence="1">
        <text>L-histidyl-[protein] + UTP = N(tele)-(5'-uridylyl)-L-histidyl-[protein] + diphosphate</text>
        <dbReference type="Rhea" id="RHEA:83891"/>
        <dbReference type="Rhea" id="RHEA-COMP:9745"/>
        <dbReference type="Rhea" id="RHEA-COMP:20239"/>
        <dbReference type="ChEBI" id="CHEBI:29979"/>
        <dbReference type="ChEBI" id="CHEBI:33019"/>
        <dbReference type="ChEBI" id="CHEBI:46398"/>
        <dbReference type="ChEBI" id="CHEBI:233474"/>
    </reaction>
</comment>
<comment type="catalytic activity">
    <reaction evidence="1">
        <text>L-seryl-[protein] + UTP = O-(5'-uridylyl)-L-seryl-[protein] + diphosphate</text>
        <dbReference type="Rhea" id="RHEA:64604"/>
        <dbReference type="Rhea" id="RHEA-COMP:9863"/>
        <dbReference type="Rhea" id="RHEA-COMP:16635"/>
        <dbReference type="ChEBI" id="CHEBI:29999"/>
        <dbReference type="ChEBI" id="CHEBI:33019"/>
        <dbReference type="ChEBI" id="CHEBI:46398"/>
        <dbReference type="ChEBI" id="CHEBI:156051"/>
    </reaction>
</comment>
<comment type="catalytic activity">
    <reaction evidence="1">
        <text>L-tyrosyl-[protein] + UTP = O-(5'-uridylyl)-L-tyrosyl-[protein] + diphosphate</text>
        <dbReference type="Rhea" id="RHEA:83887"/>
        <dbReference type="Rhea" id="RHEA-COMP:10136"/>
        <dbReference type="Rhea" id="RHEA-COMP:20238"/>
        <dbReference type="ChEBI" id="CHEBI:33019"/>
        <dbReference type="ChEBI" id="CHEBI:46398"/>
        <dbReference type="ChEBI" id="CHEBI:46858"/>
        <dbReference type="ChEBI" id="CHEBI:90602"/>
    </reaction>
</comment>
<comment type="cofactor">
    <cofactor evidence="1">
        <name>Mg(2+)</name>
        <dbReference type="ChEBI" id="CHEBI:18420"/>
    </cofactor>
    <cofactor evidence="1">
        <name>Mn(2+)</name>
        <dbReference type="ChEBI" id="CHEBI:29035"/>
    </cofactor>
</comment>
<comment type="similarity">
    <text evidence="1">Belongs to the SELO family.</text>
</comment>
<dbReference type="EC" id="2.7.7.-" evidence="1"/>
<dbReference type="EC" id="2.7.7.108" evidence="1"/>
<dbReference type="EMBL" id="AE016825">
    <property type="protein sequence ID" value="AAQ59408.1"/>
    <property type="molecule type" value="Genomic_DNA"/>
</dbReference>
<dbReference type="SMR" id="Q7NX94"/>
<dbReference type="STRING" id="243365.CV_1733"/>
<dbReference type="KEGG" id="cvi:CV_1733"/>
<dbReference type="eggNOG" id="COG0397">
    <property type="taxonomic scope" value="Bacteria"/>
</dbReference>
<dbReference type="HOGENOM" id="CLU_010245_4_1_4"/>
<dbReference type="Proteomes" id="UP000001424">
    <property type="component" value="Chromosome"/>
</dbReference>
<dbReference type="GO" id="GO:0070733">
    <property type="term" value="F:AMPylase activity"/>
    <property type="evidence" value="ECO:0007669"/>
    <property type="project" value="RHEA"/>
</dbReference>
<dbReference type="GO" id="GO:0005524">
    <property type="term" value="F:ATP binding"/>
    <property type="evidence" value="ECO:0007669"/>
    <property type="project" value="UniProtKB-UniRule"/>
</dbReference>
<dbReference type="GO" id="GO:0000287">
    <property type="term" value="F:magnesium ion binding"/>
    <property type="evidence" value="ECO:0007669"/>
    <property type="project" value="UniProtKB-UniRule"/>
</dbReference>
<dbReference type="HAMAP" id="MF_00692">
    <property type="entry name" value="YdiU_SelO"/>
    <property type="match status" value="1"/>
</dbReference>
<dbReference type="InterPro" id="IPR003846">
    <property type="entry name" value="SelO"/>
</dbReference>
<dbReference type="NCBIfam" id="NF000658">
    <property type="entry name" value="PRK00029.1"/>
    <property type="match status" value="1"/>
</dbReference>
<dbReference type="PANTHER" id="PTHR32057">
    <property type="entry name" value="PROTEIN ADENYLYLTRANSFERASE SELO, MITOCHONDRIAL"/>
    <property type="match status" value="1"/>
</dbReference>
<dbReference type="PANTHER" id="PTHR32057:SF14">
    <property type="entry name" value="PROTEIN ADENYLYLTRANSFERASE SELO, MITOCHONDRIAL"/>
    <property type="match status" value="1"/>
</dbReference>
<dbReference type="Pfam" id="PF02696">
    <property type="entry name" value="SelO"/>
    <property type="match status" value="1"/>
</dbReference>
<keyword id="KW-0067">ATP-binding</keyword>
<keyword id="KW-0460">Magnesium</keyword>
<keyword id="KW-0464">Manganese</keyword>
<keyword id="KW-0479">Metal-binding</keyword>
<keyword id="KW-0547">Nucleotide-binding</keyword>
<keyword id="KW-0548">Nucleotidyltransferase</keyword>
<keyword id="KW-1185">Reference proteome</keyword>
<keyword id="KW-0808">Transferase</keyword>
<evidence type="ECO:0000255" key="1">
    <source>
        <dbReference type="HAMAP-Rule" id="MF_00692"/>
    </source>
</evidence>
<name>SELO_CHRVO</name>
<accession>Q7NX94</accession>
<sequence length="478" mass="52251">MPEAWAPVRPETPPAPELLYWNAELADELGLDAGQTDKGELARLFSGADIPEGAQPIAQAYAGHQFGGLSPSLGDGRALLLGEVTDRNGQRRDIALKGSGQTPFSRRGDGKAAVGPMLRELIVGEAMQALGIPTTRALAVTTTGEPVYRERPLPGAVLTRVAASHLRVGTFQYFAIRGETAMLNKLADYTIARHYPQLAGRDGRHLALLAAVAERQAALIARWMHAGFIHGVMNTDNMALSGETIDYGPCAFMDAHYPGTVFSSIDHQGRYAYGNQPAIAQWNLARFAETLLPLISPDDPAAAVPAATEIVEGFEDLYQRRWLEQARRKLGLEGERDDDQALADDWLMLLAAHGVDHTLAWRYLADEAEGKGERLAALFPSPDALTPWLKQWHARHVPRTRRPPDIAAAMRRESPLYIPRNHLVEEALDAASERGDMGPTLKLLEALHQPFAERDGLDRYAQPAAAELAEGYRTFCGT</sequence>
<feature type="chain" id="PRO_0000121412" description="Protein nucleotidyltransferase YdiU">
    <location>
        <begin position="1"/>
        <end position="478"/>
    </location>
</feature>
<feature type="active site" description="Proton acceptor" evidence="1">
    <location>
        <position position="236"/>
    </location>
</feature>
<feature type="binding site" evidence="1">
    <location>
        <position position="74"/>
    </location>
    <ligand>
        <name>ATP</name>
        <dbReference type="ChEBI" id="CHEBI:30616"/>
    </ligand>
</feature>
<feature type="binding site" evidence="1">
    <location>
        <position position="76"/>
    </location>
    <ligand>
        <name>ATP</name>
        <dbReference type="ChEBI" id="CHEBI:30616"/>
    </ligand>
</feature>
<feature type="binding site" evidence="1">
    <location>
        <position position="77"/>
    </location>
    <ligand>
        <name>ATP</name>
        <dbReference type="ChEBI" id="CHEBI:30616"/>
    </ligand>
</feature>
<feature type="binding site" evidence="1">
    <location>
        <position position="97"/>
    </location>
    <ligand>
        <name>ATP</name>
        <dbReference type="ChEBI" id="CHEBI:30616"/>
    </ligand>
</feature>
<feature type="binding site" evidence="1">
    <location>
        <position position="109"/>
    </location>
    <ligand>
        <name>ATP</name>
        <dbReference type="ChEBI" id="CHEBI:30616"/>
    </ligand>
</feature>
<feature type="binding site" evidence="1">
    <location>
        <position position="110"/>
    </location>
    <ligand>
        <name>ATP</name>
        <dbReference type="ChEBI" id="CHEBI:30616"/>
    </ligand>
</feature>
<feature type="binding site" evidence="1">
    <location>
        <position position="160"/>
    </location>
    <ligand>
        <name>ATP</name>
        <dbReference type="ChEBI" id="CHEBI:30616"/>
    </ligand>
</feature>
<feature type="binding site" evidence="1">
    <location>
        <position position="167"/>
    </location>
    <ligand>
        <name>ATP</name>
        <dbReference type="ChEBI" id="CHEBI:30616"/>
    </ligand>
</feature>
<feature type="binding site" evidence="1">
    <location>
        <position position="237"/>
    </location>
    <ligand>
        <name>Mg(2+)</name>
        <dbReference type="ChEBI" id="CHEBI:18420"/>
    </ligand>
</feature>
<feature type="binding site" evidence="1">
    <location>
        <position position="246"/>
    </location>
    <ligand>
        <name>ATP</name>
        <dbReference type="ChEBI" id="CHEBI:30616"/>
    </ligand>
</feature>
<feature type="binding site" evidence="1">
    <location>
        <position position="246"/>
    </location>
    <ligand>
        <name>Mg(2+)</name>
        <dbReference type="ChEBI" id="CHEBI:18420"/>
    </ligand>
</feature>
<reference key="1">
    <citation type="journal article" date="2003" name="Proc. Natl. Acad. Sci. U.S.A.">
        <title>The complete genome sequence of Chromobacterium violaceum reveals remarkable and exploitable bacterial adaptability.</title>
        <authorList>
            <person name="Vasconcelos A.T.R."/>
            <person name="de Almeida D.F."/>
            <person name="Hungria M."/>
            <person name="Guimaraes C.T."/>
            <person name="Antonio R.V."/>
            <person name="Almeida F.C."/>
            <person name="de Almeida L.G.P."/>
            <person name="de Almeida R."/>
            <person name="Alves-Gomes J.A."/>
            <person name="Andrade E.M."/>
            <person name="Araripe J."/>
            <person name="de Araujo M.F.F."/>
            <person name="Astolfi-Filho S."/>
            <person name="Azevedo V."/>
            <person name="Baptista A.J."/>
            <person name="Bataus L.A.M."/>
            <person name="Batista J.S."/>
            <person name="Belo A."/>
            <person name="van den Berg C."/>
            <person name="Bogo M."/>
            <person name="Bonatto S."/>
            <person name="Bordignon J."/>
            <person name="Brigido M.M."/>
            <person name="Brito C.A."/>
            <person name="Brocchi M."/>
            <person name="Burity H.A."/>
            <person name="Camargo A.A."/>
            <person name="Cardoso D.D.P."/>
            <person name="Carneiro N.P."/>
            <person name="Carraro D.M."/>
            <person name="Carvalho C.M.B."/>
            <person name="Cascardo J.C.M."/>
            <person name="Cavada B.S."/>
            <person name="Chueire L.M.O."/>
            <person name="Creczynski-Pasa T.B."/>
            <person name="Cunha-Junior N.C."/>
            <person name="Fagundes N."/>
            <person name="Falcao C.L."/>
            <person name="Fantinatti F."/>
            <person name="Farias I.P."/>
            <person name="Felipe M.S.S."/>
            <person name="Ferrari L.P."/>
            <person name="Ferro J.A."/>
            <person name="Ferro M.I.T."/>
            <person name="Franco G.R."/>
            <person name="Freitas N.S.A."/>
            <person name="Furlan L.R."/>
            <person name="Gazzinelli R.T."/>
            <person name="Gomes E.A."/>
            <person name="Goncalves P.R."/>
            <person name="Grangeiro T.B."/>
            <person name="Grattapaglia D."/>
            <person name="Grisard E.C."/>
            <person name="Hanna E.S."/>
            <person name="Jardim S.N."/>
            <person name="Laurino J."/>
            <person name="Leoi L.C.T."/>
            <person name="Lima L.F.A."/>
            <person name="Loureiro M.F."/>
            <person name="Lyra M.C.C.P."/>
            <person name="Madeira H.M.F."/>
            <person name="Manfio G.P."/>
            <person name="Maranhao A.Q."/>
            <person name="Martins W.S."/>
            <person name="di Mauro S.M.Z."/>
            <person name="de Medeiros S.R.B."/>
            <person name="Meissner R.V."/>
            <person name="Moreira M.A.M."/>
            <person name="Nascimento F.F."/>
            <person name="Nicolas M.F."/>
            <person name="Oliveira J.G."/>
            <person name="Oliveira S.C."/>
            <person name="Paixao R.F.C."/>
            <person name="Parente J.A."/>
            <person name="Pedrosa F.O."/>
            <person name="Pena S.D.J."/>
            <person name="Pereira J.O."/>
            <person name="Pereira M."/>
            <person name="Pinto L.S.R.C."/>
            <person name="Pinto L.S."/>
            <person name="Porto J.I.R."/>
            <person name="Potrich D.P."/>
            <person name="Ramalho-Neto C.E."/>
            <person name="Reis A.M.M."/>
            <person name="Rigo L.U."/>
            <person name="Rondinelli E."/>
            <person name="Santos E.B.P."/>
            <person name="Santos F.R."/>
            <person name="Schneider M.P.C."/>
            <person name="Seuanez H.N."/>
            <person name="Silva A.M.R."/>
            <person name="da Silva A.L.C."/>
            <person name="Silva D.W."/>
            <person name="Silva R."/>
            <person name="Simoes I.C."/>
            <person name="Simon D."/>
            <person name="Soares C.M.A."/>
            <person name="Soares R.B.A."/>
            <person name="Souza E.M."/>
            <person name="Souza K.R.L."/>
            <person name="Souza R.C."/>
            <person name="Steffens M.B.R."/>
            <person name="Steindel M."/>
            <person name="Teixeira S.R."/>
            <person name="Urmenyi T."/>
            <person name="Vettore A."/>
            <person name="Wassem R."/>
            <person name="Zaha A."/>
            <person name="Simpson A.J.G."/>
        </authorList>
    </citation>
    <scope>NUCLEOTIDE SEQUENCE [LARGE SCALE GENOMIC DNA]</scope>
    <source>
        <strain>ATCC 12472 / DSM 30191 / JCM 1249 / CCUG 213 / NBRC 12614 / NCIMB 9131 / NCTC 9757 / MK</strain>
    </source>
</reference>